<reference key="1">
    <citation type="submission" date="2001-02" db="EMBL/GenBank/DDBJ databases">
        <title>Expression and genomic characterization of Otg1, a novel gene expressed in postnatal germ cells in the mouse.</title>
        <authorList>
            <person name="Varani S."/>
            <person name="Racie L."/>
            <person name="Matzuk M.M."/>
        </authorList>
    </citation>
    <scope>NUCLEOTIDE SEQUENCE [MRNA]</scope>
</reference>
<reference key="2">
    <citation type="submission" date="2001-07" db="EMBL/GenBank/DDBJ databases">
        <authorList>
            <person name="Adachi J."/>
            <person name="Aizawa K."/>
            <person name="Akimura T."/>
            <person name="Arakawa T."/>
            <person name="Bono H."/>
            <person name="Carninci P."/>
            <person name="Fukuda S."/>
            <person name="Furuno M."/>
            <person name="Hanagaki T."/>
            <person name="Hara A."/>
            <person name="Hashizume W."/>
            <person name="Hayashida K."/>
            <person name="Hayatsu N."/>
            <person name="Hiramoto K."/>
            <person name="Hiraoka T."/>
            <person name="Hirozane T."/>
            <person name="Hori F."/>
            <person name="Imotani K."/>
            <person name="Ishii Y."/>
            <person name="Itoh M."/>
            <person name="Kagawa I."/>
            <person name="Kasukawa T."/>
            <person name="Katoh H."/>
            <person name="Kawai J."/>
            <person name="Kojima Y."/>
            <person name="Kondo S."/>
            <person name="Konno H."/>
            <person name="Kouda M."/>
            <person name="Koya S."/>
            <person name="Kurihara C."/>
            <person name="Matsuyama T."/>
            <person name="Miyazaki A."/>
            <person name="Murata M."/>
            <person name="Nakamura M."/>
            <person name="Nishi K."/>
            <person name="Nomura K."/>
            <person name="Numazaki R."/>
            <person name="Ohno M."/>
            <person name="Ohsato N."/>
            <person name="Okazaki Y."/>
            <person name="Saito R."/>
            <person name="Saitoh H."/>
            <person name="Sakai C."/>
            <person name="Sakai K."/>
            <person name="Sakazume N."/>
            <person name="Sano H."/>
            <person name="Sasaki D."/>
            <person name="Shibata K."/>
            <person name="Shinagawa A."/>
            <person name="Shiraki T."/>
            <person name="Sogabe Y."/>
            <person name="Tagami M."/>
            <person name="Tagawa A."/>
            <person name="Takahashi F."/>
            <person name="Takaku-Akahira S."/>
            <person name="Takeda Y."/>
            <person name="Tanaka T."/>
            <person name="Tomaru A."/>
            <person name="Toya T."/>
            <person name="Yasunishi A."/>
            <person name="Muramatsu M."/>
            <person name="Hayashizaki Y."/>
        </authorList>
    </citation>
    <scope>NUCLEOTIDE SEQUENCE [LARGE SCALE MRNA] OF 1-362</scope>
    <source>
        <strain>C57BL/6J</strain>
        <tissue>Thymus</tissue>
    </source>
</reference>
<reference key="3">
    <citation type="journal article" date="2004" name="Genome Res.">
        <title>The status, quality, and expansion of the NIH full-length cDNA project: the Mammalian Gene Collection (MGC).</title>
        <authorList>
            <consortium name="The MGC Project Team"/>
        </authorList>
    </citation>
    <scope>NUCLEOTIDE SEQUENCE [LARGE SCALE MRNA] OF 1-234</scope>
    <source>
        <strain>Czech II</strain>
        <tissue>Lung</tissue>
    </source>
</reference>
<reference key="4">
    <citation type="journal article" date="2010" name="Cell">
        <title>A tissue-specific atlas of mouse protein phosphorylation and expression.</title>
        <authorList>
            <person name="Huttlin E.L."/>
            <person name="Jedrychowski M.P."/>
            <person name="Elias J.E."/>
            <person name="Goswami T."/>
            <person name="Rad R."/>
            <person name="Beausoleil S.A."/>
            <person name="Villen J."/>
            <person name="Haas W."/>
            <person name="Sowa M.E."/>
            <person name="Gygi S.P."/>
        </authorList>
    </citation>
    <scope>PHOSPHORYLATION [LARGE SCALE ANALYSIS] AT SER-759</scope>
    <scope>IDENTIFICATION BY MASS SPECTROMETRY [LARGE SCALE ANALYSIS]</scope>
    <source>
        <tissue>Brain</tissue>
        <tissue>Heart</tissue>
        <tissue>Liver</tissue>
        <tissue>Lung</tissue>
        <tissue>Pancreas</tissue>
        <tissue>Testis</tissue>
    </source>
</reference>
<accession>Q8C9S4</accession>
<accession>Q6P3D6</accession>
<accession>Q8CJC0</accession>
<keyword id="KW-0175">Coiled coil</keyword>
<keyword id="KW-0597">Phosphoprotein</keyword>
<keyword id="KW-1185">Reference proteome</keyword>
<proteinExistence type="evidence at protein level"/>
<name>CC186_MOUSE</name>
<evidence type="ECO:0000255" key="1"/>
<evidence type="ECO:0000256" key="2">
    <source>
        <dbReference type="SAM" id="MobiDB-lite"/>
    </source>
</evidence>
<evidence type="ECO:0000305" key="3"/>
<evidence type="ECO:0007744" key="4">
    <source>
    </source>
</evidence>
<protein>
    <recommendedName>
        <fullName>Coiled-coil domain-containing protein 186</fullName>
    </recommendedName>
    <alternativeName>
        <fullName>Oocyte-testis gene 1 protein</fullName>
    </alternativeName>
</protein>
<gene>
    <name type="primary">Ccdc186</name>
    <name type="synonym">Otg1</name>
</gene>
<comment type="tissue specificity">
    <text>Expressed in postnatal germ cells.</text>
</comment>
<comment type="caution">
    <text evidence="3">It is uncertain whether Met-1 or Met-19 is the initiator.</text>
</comment>
<comment type="sequence caution" evidence="3">
    <conflict type="miscellaneous discrepancy">
        <sequence resource="EMBL-CDS" id="AAH64039"/>
    </conflict>
    <text>Contaminating sequence. Potential poly-A sequence.</text>
</comment>
<organism>
    <name type="scientific">Mus musculus</name>
    <name type="common">Mouse</name>
    <dbReference type="NCBI Taxonomy" id="10090"/>
    <lineage>
        <taxon>Eukaryota</taxon>
        <taxon>Metazoa</taxon>
        <taxon>Chordata</taxon>
        <taxon>Craniata</taxon>
        <taxon>Vertebrata</taxon>
        <taxon>Euteleostomi</taxon>
        <taxon>Mammalia</taxon>
        <taxon>Eutheria</taxon>
        <taxon>Euarchontoglires</taxon>
        <taxon>Glires</taxon>
        <taxon>Rodentia</taxon>
        <taxon>Myomorpha</taxon>
        <taxon>Muroidea</taxon>
        <taxon>Muridae</taxon>
        <taxon>Murinae</taxon>
        <taxon>Mus</taxon>
        <taxon>Mus</taxon>
    </lineage>
</organism>
<sequence length="917" mass="104901">MKIRSRFEEMQSELVPVSMSETEHIASISSDATTEKTSELRDDSCISVSGDESSRLETGAELLSLDSDRILCQTNEHCSQIEVQESHIPDCGSGENSCANTDTCPEDSGQIDDFPGGDFTEQVSKTKEPEQTVTQILAELKSSAPAEAANPKTASASLYDTDCTRKLISEMKTVSASDDLLGEIESELLSAEFAEGHQVPNGLNKGEQALALFEKCVHSRYLQQELTVKQLIKENKNHQELILNICSEKDSLREELRKRTETEKQHMNTIKQLELRIEELNKEIKASKDQLVAQDVTAKNAIQQIHKEMAQRMDQANKKCEEARQEKEAMVMKYVRGEKEALDLRKEKETLERKLRDASKELEKNTNKIKQLSQEKGRLQQLYESKEGETTRLIREIEKLKEEMNSQVIKVKWAQNKLKAEMDSHKETKDKLKETTTKLTQAKEEAEQIRQNCQDMIKTYQESEEIKSNELDAKLRVTKGELEKQMQEKSDQLEMHHAKIKELEDLKRTFKEGMDELRTLRTKAKCLEDERLRTEDELSKYREIINRQKSEIQNLLDKVKITDQLHEQLQSGKQEIEHLKEEMESLNSLINDLQKDIEGSRKRESELLLFTEKLTSKNAQLQSESSALQSQVDNLSCTESQLQSQCQQMGQANRNLESKLLKEEELRKEEVQTLQAELSAAQTEVKALSTQVEELKDELVTQRRKHASNVKDLSKQLQQARRKLEQTENGNHDKDISSMGSRSSSSGSLNARISAEDRSPENTSSSVAVDNFPEVDKAMLIERIVRLQKAHARKNEKIEFMEDHIKQLVEEIRKKTKIIQSYVLREESGTLSSEASDFNKVHLSRRGGIMASLYTSHPADSGLTLELSLEINRKLQAVLEDTLLKNITLKENLQTLGTEIERLIKHQHELEQRTKKA</sequence>
<dbReference type="EMBL" id="AF349751">
    <property type="protein sequence ID" value="AAN61566.1"/>
    <property type="molecule type" value="mRNA"/>
</dbReference>
<dbReference type="EMBL" id="AK041398">
    <property type="protein sequence ID" value="BAC30931.1"/>
    <property type="molecule type" value="mRNA"/>
</dbReference>
<dbReference type="EMBL" id="BC064039">
    <property type="protein sequence ID" value="AAH64039.1"/>
    <property type="status" value="ALT_SEQ"/>
    <property type="molecule type" value="mRNA"/>
</dbReference>
<dbReference type="CCDS" id="CCDS29921.1"/>
<dbReference type="RefSeq" id="NP_739563.1">
    <property type="nucleotide sequence ID" value="NM_170757.2"/>
</dbReference>
<dbReference type="RefSeq" id="XP_006526914.1">
    <property type="nucleotide sequence ID" value="XM_006526851.3"/>
</dbReference>
<dbReference type="SMR" id="Q8C9S4"/>
<dbReference type="FunCoup" id="Q8C9S4">
    <property type="interactions" value="2522"/>
</dbReference>
<dbReference type="STRING" id="10090.ENSMUSP00000113457"/>
<dbReference type="GlyGen" id="Q8C9S4">
    <property type="glycosylation" value="2 sites, 1 O-linked glycan (2 sites)"/>
</dbReference>
<dbReference type="iPTMnet" id="Q8C9S4"/>
<dbReference type="PhosphoSitePlus" id="Q8C9S4"/>
<dbReference type="SwissPalm" id="Q8C9S4"/>
<dbReference type="PaxDb" id="10090-ENSMUSP00000113457"/>
<dbReference type="PeptideAtlas" id="Q8C9S4"/>
<dbReference type="ProteomicsDB" id="281489"/>
<dbReference type="Pumba" id="Q8C9S4"/>
<dbReference type="Antibodypedia" id="2907">
    <property type="antibodies" value="31 antibodies from 10 providers"/>
</dbReference>
<dbReference type="DNASU" id="213993"/>
<dbReference type="Ensembl" id="ENSMUST00000076085.4">
    <property type="protein sequence ID" value="ENSMUSP00000075454.4"/>
    <property type="gene ID" value="ENSMUSG00000035173.15"/>
</dbReference>
<dbReference type="Ensembl" id="ENSMUST00000118592.8">
    <property type="protein sequence ID" value="ENSMUSP00000113457.2"/>
    <property type="gene ID" value="ENSMUSG00000035173.15"/>
</dbReference>
<dbReference type="GeneID" id="213993"/>
<dbReference type="KEGG" id="mmu:213993"/>
<dbReference type="UCSC" id="uc008hzg.1">
    <property type="organism name" value="mouse"/>
</dbReference>
<dbReference type="AGR" id="MGI:2445022"/>
<dbReference type="CTD" id="55088"/>
<dbReference type="MGI" id="MGI:2445022">
    <property type="gene designation" value="Ccdc186"/>
</dbReference>
<dbReference type="VEuPathDB" id="HostDB:ENSMUSG00000035173"/>
<dbReference type="eggNOG" id="KOG0992">
    <property type="taxonomic scope" value="Eukaryota"/>
</dbReference>
<dbReference type="eggNOG" id="KOG1836">
    <property type="taxonomic scope" value="Eukaryota"/>
</dbReference>
<dbReference type="GeneTree" id="ENSGT00720000108851"/>
<dbReference type="HOGENOM" id="CLU_007958_0_0_1"/>
<dbReference type="InParanoid" id="Q8C9S4"/>
<dbReference type="OMA" id="TLSNGMC"/>
<dbReference type="OrthoDB" id="5583482at2759"/>
<dbReference type="PhylomeDB" id="Q8C9S4"/>
<dbReference type="TreeFam" id="TF328785"/>
<dbReference type="BioGRID-ORCS" id="213993">
    <property type="hits" value="0 hits in 77 CRISPR screens"/>
</dbReference>
<dbReference type="PRO" id="PR:Q8C9S4"/>
<dbReference type="Proteomes" id="UP000000589">
    <property type="component" value="Chromosome 19"/>
</dbReference>
<dbReference type="RNAct" id="Q8C9S4">
    <property type="molecule type" value="protein"/>
</dbReference>
<dbReference type="Bgee" id="ENSMUSG00000035173">
    <property type="expression patterns" value="Expressed in animal zygote and 266 other cell types or tissues"/>
</dbReference>
<dbReference type="ExpressionAtlas" id="Q8C9S4">
    <property type="expression patterns" value="baseline and differential"/>
</dbReference>
<dbReference type="GO" id="GO:0005794">
    <property type="term" value="C:Golgi apparatus"/>
    <property type="evidence" value="ECO:0000314"/>
    <property type="project" value="MGI"/>
</dbReference>
<dbReference type="GO" id="GO:0042593">
    <property type="term" value="P:glucose homeostasis"/>
    <property type="evidence" value="ECO:0000315"/>
    <property type="project" value="MGI"/>
</dbReference>
<dbReference type="GO" id="GO:0035773">
    <property type="term" value="P:insulin secretion involved in cellular response to glucose stimulus"/>
    <property type="evidence" value="ECO:0000315"/>
    <property type="project" value="MGI"/>
</dbReference>
<dbReference type="GO" id="GO:0009617">
    <property type="term" value="P:response to bacterium"/>
    <property type="evidence" value="ECO:0000270"/>
    <property type="project" value="MGI"/>
</dbReference>
<dbReference type="GO" id="GO:0099518">
    <property type="term" value="P:vesicle cytoskeletal trafficking"/>
    <property type="evidence" value="ECO:0000315"/>
    <property type="project" value="MGI"/>
</dbReference>
<dbReference type="InterPro" id="IPR038830">
    <property type="entry name" value="CCDC186"/>
</dbReference>
<dbReference type="PANTHER" id="PTHR18911:SF5">
    <property type="entry name" value="COILED-COIL DOMAIN-CONTAINING PROTEIN 186"/>
    <property type="match status" value="1"/>
</dbReference>
<dbReference type="PANTHER" id="PTHR18911">
    <property type="entry name" value="CTCL TUMOR ANTIGEN HD-CL-01"/>
    <property type="match status" value="1"/>
</dbReference>
<feature type="chain" id="PRO_0000089824" description="Coiled-coil domain-containing protein 186">
    <location>
        <begin position="1"/>
        <end position="917"/>
    </location>
</feature>
<feature type="region of interest" description="Disordered" evidence="2">
    <location>
        <begin position="1"/>
        <end position="52"/>
    </location>
</feature>
<feature type="region of interest" description="Disordered" evidence="2">
    <location>
        <begin position="97"/>
        <end position="118"/>
    </location>
</feature>
<feature type="region of interest" description="Disordered" evidence="2">
    <location>
        <begin position="701"/>
        <end position="769"/>
    </location>
</feature>
<feature type="coiled-coil region" evidence="1">
    <location>
        <begin position="220"/>
        <end position="736"/>
    </location>
</feature>
<feature type="coiled-coil region" evidence="1">
    <location>
        <begin position="778"/>
        <end position="822"/>
    </location>
</feature>
<feature type="coiled-coil region" evidence="1">
    <location>
        <begin position="874"/>
        <end position="913"/>
    </location>
</feature>
<feature type="compositionally biased region" description="Basic and acidic residues" evidence="2">
    <location>
        <begin position="33"/>
        <end position="44"/>
    </location>
</feature>
<feature type="compositionally biased region" description="Basic and acidic residues" evidence="2">
    <location>
        <begin position="722"/>
        <end position="736"/>
    </location>
</feature>
<feature type="compositionally biased region" description="Low complexity" evidence="2">
    <location>
        <begin position="737"/>
        <end position="748"/>
    </location>
</feature>
<feature type="modified residue" description="Phosphoserine" evidence="4">
    <location>
        <position position="759"/>
    </location>
</feature>